<organism>
    <name type="scientific">Pleurotus sapidus</name>
    <name type="common">Oyster mushroom</name>
    <name type="synonym">Agaricus sapidus</name>
    <dbReference type="NCBI Taxonomy" id="98349"/>
    <lineage>
        <taxon>Eukaryota</taxon>
        <taxon>Fungi</taxon>
        <taxon>Dikarya</taxon>
        <taxon>Basidiomycota</taxon>
        <taxon>Agaricomycotina</taxon>
        <taxon>Agaricomycetes</taxon>
        <taxon>Agaricomycetidae</taxon>
        <taxon>Agaricales</taxon>
        <taxon>Pleurotineae</taxon>
        <taxon>Pleurotaceae</taxon>
        <taxon>Pleurotus</taxon>
    </lineage>
</organism>
<comment type="function">
    <text evidence="5">Lipoxygenase that metabolizes linoleic and alpha-linolenic acids to 13S-hydroperoxy fatty acids.</text>
</comment>
<comment type="catalytic activity">
    <reaction evidence="7 12">
        <text>(9Z,12Z)-octadecadienoate + O2 = (13S)-hydroperoxy-(9Z,11E)-octadecadienoate</text>
        <dbReference type="Rhea" id="RHEA:22780"/>
        <dbReference type="ChEBI" id="CHEBI:15379"/>
        <dbReference type="ChEBI" id="CHEBI:30245"/>
        <dbReference type="ChEBI" id="CHEBI:57466"/>
        <dbReference type="EC" id="1.13.11.12"/>
    </reaction>
</comment>
<comment type="cofactor">
    <cofactor evidence="2">
        <name>Mn(2+)</name>
        <dbReference type="ChEBI" id="CHEBI:29035"/>
    </cofactor>
    <text evidence="2">Three His residues, the carboxyl oxygen of the C-terminal Ile or Val residue, and a fifth residue, usually Asn, ligate the metal, which binds water to form a catalytic base Mn(2+)OH(2) for hydrogen abstraction.</text>
</comment>
<comment type="biophysicochemical properties">
    <kinetics>
        <KM evidence="7">40.3 uM for linoleic acid (at pH 7.0 and 22 degrees Celsius)</KM>
        <text evidence="7">kcat is 157 sec(-1) for linoleic acid (at pH 7.0 and 22 degrees Celsius).</text>
    </kinetics>
    <phDependence>
        <text evidence="5 7">Optimum pH is 7.0.</text>
    </phDependence>
    <temperatureDependence>
        <text evidence="5 7">Optimum temperature is 37 degrees Celsius (PubMed:34033194). Optimum temperature is 35 degrees Celsius (Ref.3).</text>
    </temperatureDependence>
</comment>
<comment type="biotechnology">
    <text evidence="4 5 6 7">The oxidation of primary substrates may lead to co-oxidation of other molecules (PubMed:34033194, Ref.2). Cleaves piperine to piperonal and 3,4-methylenedioxycinnamaldehyde (PubMed:34033194). Converts (+)-valencene to (+)-nootkatone, alpha-nootkatol and beta-nootkatol (PubMed:22264428, Ref.2, Ref.3). Converts trans-anethole to p-methoxybenzaldehyde (PubMed:34033194). Converts trans-isomethyleugenol to veratraldehyde (PubMed:34033194). Converts alpha-methylstyrene to acetophenone (PubMed:34033194).</text>
</comment>
<comment type="similarity">
    <text evidence="11">Belongs to the lipoxygenase family.</text>
</comment>
<comment type="sequence caution" evidence="11">
    <conflict type="erroneous initiation">
        <sequence resource="EMBL-CDS" id="CAQ87588"/>
    </conflict>
    <text>Truncated N-terminus.</text>
</comment>
<comment type="sequence caution" evidence="11">
    <conflict type="miscellaneous discrepancy">
        <sequence resource="EMBL-CDS" id="CAQ87588"/>
    </conflict>
    <text>This sequence differs from that shown at positions 419, 539, 548-551, and 873.</text>
</comment>
<proteinExistence type="evidence at protein level"/>
<reference evidence="14" key="1">
    <citation type="journal article" date="2012" name="Bioresour. Technol.">
        <title>Functional expression of a valencene dioxygenase from Pleurotus sapidus in E. coli.</title>
        <authorList>
            <person name="Zelena K."/>
            <person name="Krings U."/>
            <person name="Berger R.G."/>
        </authorList>
    </citation>
    <scope>NUCLEOTIDE SEQUENCE [MRNA]</scope>
    <scope>BIOTECHNOLOGY</scope>
    <source>
        <strain evidence="14">DSMZ 8266</strain>
    </source>
</reference>
<reference evidence="13" key="2">
    <citation type="journal article" date="2009" name="J. Mol. Catal., B Enzym.">
        <title>A novel oxygenase from Pleurotus sapidus transforms valencene to nootkatone.</title>
        <authorList>
            <person name="Fraatz M.A."/>
            <person name="Riemer S.J.L."/>
            <person name="Stuber R."/>
            <person name="Kaspera R."/>
            <person name="Nimtz M."/>
            <person name="Berger R.G."/>
            <person name="Zorn H."/>
        </authorList>
    </citation>
    <scope>NUCLEOTIDE SEQUENCE [MRNA] OF 235-643</scope>
    <scope>IDENTIFICATION BY MASS SPECTROMETRY</scope>
    <scope>BIOTECHNOLOGY</scope>
</reference>
<reference evidence="11" key="3">
    <citation type="journal article" date="2013" name="J. Mol. Catal., B Enzym.">
        <title>LOXPsa1, the first recombinant lipoxygenase from a basidiomycete fungus.</title>
        <authorList>
            <person name="Plagemann I."/>
            <person name="Zelena K."/>
            <person name="Arendt P."/>
            <person name="Ringel P.D."/>
            <person name="Krings U."/>
            <person name="Berger R.G."/>
        </authorList>
    </citation>
    <scope>FUNCTION</scope>
    <scope>CATALYTIC ACTIVITY</scope>
    <scope>BIOPHYSICOCHEMICAL PROPERTIES</scope>
    <scope>BIOTECHNOLOGY</scope>
</reference>
<reference evidence="11" key="4">
    <citation type="journal article" date="2021" name="ChemBioChem">
        <title>Co-Oxidative Transformation of Piperine to Piperonal and 3,4-Methylenedioxycinnamaldehyde by a Lipoxygenase from Pleurotus sapidus.</title>
        <authorList>
            <person name="Krahe N.K."/>
            <person name="Berger R.G."/>
            <person name="Kahlert L."/>
            <person name="Ersoy F."/>
        </authorList>
    </citation>
    <scope>FUNCTION</scope>
    <scope>BIOPHYSICOCHEMICAL PROPERTIES</scope>
    <scope>IDENTIFICATION BY MASS SPECTROMETRY</scope>
    <scope>BIOTECHNOLOGY</scope>
</reference>
<gene>
    <name evidence="8" type="primary">LOX1</name>
</gene>
<keyword id="KW-0223">Dioxygenase</keyword>
<keyword id="KW-0464">Manganese</keyword>
<keyword id="KW-0479">Metal-binding</keyword>
<keyword id="KW-0560">Oxidoreductase</keyword>
<protein>
    <recommendedName>
        <fullName evidence="8">Manganese lipoxygenase</fullName>
        <ecNumber evidence="7 12">1.13.11.12</ecNumber>
    </recommendedName>
    <alternativeName>
        <fullName evidence="10">LOXPsa1</fullName>
    </alternativeName>
    <alternativeName>
        <fullName evidence="9">Valencene dioxygenase</fullName>
        <shortName evidence="9">ValOx</shortName>
    </alternativeName>
</protein>
<accession>M5EES5</accession>
<accession>B8ZIU7</accession>
<sequence>MVHNISLSSRKALHNVHLPYMVQLPKPTGYNVALKNAAEGYDKARRMVAWLYDIADYESSIPQTFTLQQKTDKYTWELSDNFPPHLAVVPPDQSVSAPSIFSPVRLAQTLLIMSSLWYDDHTDLAPGPEQNTMQKLTQWNQERHKDQGWLIKDMFNAPNIGLRNDWYTDEVFAQQFFTGPNSTTITLASDVWLTAFTSEAKAQGKDKVIALFESAPPNSFYVQDFSDFRRRMGAKPDEELFNDSDGAMRYGCAAVALFYLTAMGKLHPLAIIPDYKGSMAASVTIFNKRTNPLDISVNQANDWPWRYAKTCVLSSDWALHEMIIHLNNTHLVEEAVIVAAQRKLSPSHIVFRLLEPHWVVTLSLNALARSVLIPEVIVPIAGFSAPHIFQFIRESFTNFDWKSLYVPADLESRGFPVDQLNSPKFHNYAYARDINDMWTTLKKFVSSVLQDAQYYPDDASVAGDTQIQAWCDEMRSGMGAGMTNFPESITTVDDLVNMVTMCIHIAAPQHTAVNYLQQYYQTFVPNKPSALFSPLPTSIAQLQKYTESDLMAALPLNAKRQWLLMAQIPYLLSMQVQEDENIVTYAANASTDKDPIIASAGRQLAADLKKLAAVFLVNSAQLDDQNTPYDVLAPEQLANAIVI</sequence>
<evidence type="ECO:0000250" key="1">
    <source>
        <dbReference type="UniProtKB" id="G4NAP4"/>
    </source>
</evidence>
<evidence type="ECO:0000250" key="2">
    <source>
        <dbReference type="UniProtKB" id="Q8X151"/>
    </source>
</evidence>
<evidence type="ECO:0000255" key="3">
    <source>
        <dbReference type="PROSITE-ProRule" id="PRU00726"/>
    </source>
</evidence>
<evidence type="ECO:0000269" key="4">
    <source>
    </source>
</evidence>
<evidence type="ECO:0000269" key="5">
    <source>
    </source>
</evidence>
<evidence type="ECO:0000269" key="6">
    <source ref="2"/>
</evidence>
<evidence type="ECO:0000269" key="7">
    <source ref="3"/>
</evidence>
<evidence type="ECO:0000303" key="8">
    <source>
    </source>
</evidence>
<evidence type="ECO:0000303" key="9">
    <source ref="2"/>
</evidence>
<evidence type="ECO:0000303" key="10">
    <source ref="3"/>
</evidence>
<evidence type="ECO:0000305" key="11"/>
<evidence type="ECO:0000305" key="12">
    <source>
    </source>
</evidence>
<evidence type="ECO:0000312" key="13">
    <source>
        <dbReference type="EMBL" id="CAQ87588.1"/>
    </source>
</evidence>
<evidence type="ECO:0000312" key="14">
    <source>
        <dbReference type="EMBL" id="CCV01581.1"/>
    </source>
</evidence>
<name>MNLOX_PLESI</name>
<dbReference type="EC" id="1.13.11.12" evidence="7 12"/>
<dbReference type="EMBL" id="HF913621">
    <property type="protein sequence ID" value="CCV01581.1"/>
    <property type="molecule type" value="mRNA"/>
</dbReference>
<dbReference type="EMBL" id="FM200795">
    <property type="protein sequence ID" value="CAQ87588.1"/>
    <property type="status" value="ALT_INIT"/>
    <property type="molecule type" value="mRNA"/>
</dbReference>
<dbReference type="SMR" id="M5EES5"/>
<dbReference type="GO" id="GO:0016165">
    <property type="term" value="F:linoleate 13S-lipoxygenase activity"/>
    <property type="evidence" value="ECO:0000314"/>
    <property type="project" value="UniProtKB"/>
</dbReference>
<dbReference type="GO" id="GO:0046872">
    <property type="term" value="F:metal ion binding"/>
    <property type="evidence" value="ECO:0007669"/>
    <property type="project" value="UniProtKB-KW"/>
</dbReference>
<dbReference type="GO" id="GO:0043651">
    <property type="term" value="P:linoleic acid metabolic process"/>
    <property type="evidence" value="ECO:0000305"/>
    <property type="project" value="UniProtKB"/>
</dbReference>
<dbReference type="GO" id="GO:0034440">
    <property type="term" value="P:lipid oxidation"/>
    <property type="evidence" value="ECO:0007669"/>
    <property type="project" value="InterPro"/>
</dbReference>
<dbReference type="Gene3D" id="3.10.450.60">
    <property type="match status" value="1"/>
</dbReference>
<dbReference type="Gene3D" id="1.20.245.10">
    <property type="entry name" value="Lipoxygenase-1, Domain 5"/>
    <property type="match status" value="1"/>
</dbReference>
<dbReference type="InterPro" id="IPR000907">
    <property type="entry name" value="LipOase"/>
</dbReference>
<dbReference type="InterPro" id="IPR013819">
    <property type="entry name" value="LipOase_C"/>
</dbReference>
<dbReference type="InterPro" id="IPR036226">
    <property type="entry name" value="LipOase_C_sf"/>
</dbReference>
<dbReference type="PANTHER" id="PTHR11771">
    <property type="entry name" value="LIPOXYGENASE"/>
    <property type="match status" value="1"/>
</dbReference>
<dbReference type="Pfam" id="PF00305">
    <property type="entry name" value="Lipoxygenase"/>
    <property type="match status" value="1"/>
</dbReference>
<dbReference type="PRINTS" id="PR00087">
    <property type="entry name" value="LIPOXYGENASE"/>
</dbReference>
<dbReference type="SUPFAM" id="SSF48484">
    <property type="entry name" value="Lipoxigenase"/>
    <property type="match status" value="1"/>
</dbReference>
<dbReference type="PROSITE" id="PS51393">
    <property type="entry name" value="LIPOXYGENASE_3"/>
    <property type="match status" value="1"/>
</dbReference>
<feature type="chain" id="PRO_0000454734" description="Manganese lipoxygenase">
    <location>
        <begin position="1"/>
        <end position="643"/>
    </location>
</feature>
<feature type="domain" description="Lipoxygenase" evidence="3">
    <location>
        <begin position="166"/>
        <end position="643"/>
    </location>
</feature>
<feature type="binding site" evidence="1">
    <location>
        <position position="325"/>
    </location>
    <ligand>
        <name>Mn(2+)</name>
        <dbReference type="ChEBI" id="CHEBI:29035"/>
        <note>catalytic</note>
    </ligand>
</feature>
<feature type="binding site" evidence="1">
    <location>
        <position position="330"/>
    </location>
    <ligand>
        <name>Mn(2+)</name>
        <dbReference type="ChEBI" id="CHEBI:29035"/>
        <note>catalytic</note>
    </ligand>
</feature>
<feature type="binding site" evidence="1">
    <location>
        <position position="510"/>
    </location>
    <ligand>
        <name>Mn(2+)</name>
        <dbReference type="ChEBI" id="CHEBI:29035"/>
        <note>catalytic</note>
    </ligand>
</feature>
<feature type="binding site" evidence="1">
    <location>
        <position position="514"/>
    </location>
    <ligand>
        <name>Mn(2+)</name>
        <dbReference type="ChEBI" id="CHEBI:29035"/>
        <note>catalytic</note>
    </ligand>
</feature>
<feature type="binding site" evidence="1">
    <location>
        <position position="643"/>
    </location>
    <ligand>
        <name>Mn(2+)</name>
        <dbReference type="ChEBI" id="CHEBI:29035"/>
        <note>catalytic</note>
    </ligand>
</feature>
<feature type="sequence conflict" description="In Ref. 2; CAQ87588." evidence="11" ref="2">
    <original>P</original>
    <variation>S</variation>
    <location>
        <position position="525"/>
    </location>
</feature>